<organism>
    <name type="scientific">Shigella flexneri</name>
    <dbReference type="NCBI Taxonomy" id="623"/>
    <lineage>
        <taxon>Bacteria</taxon>
        <taxon>Pseudomonadati</taxon>
        <taxon>Pseudomonadota</taxon>
        <taxon>Gammaproteobacteria</taxon>
        <taxon>Enterobacterales</taxon>
        <taxon>Enterobacteriaceae</taxon>
        <taxon>Shigella</taxon>
    </lineage>
</organism>
<name>FLGM_SHIFL</name>
<reference key="1">
    <citation type="journal article" date="2002" name="Nucleic Acids Res.">
        <title>Genome sequence of Shigella flexneri 2a: insights into pathogenicity through comparison with genomes of Escherichia coli K12 and O157.</title>
        <authorList>
            <person name="Jin Q."/>
            <person name="Yuan Z."/>
            <person name="Xu J."/>
            <person name="Wang Y."/>
            <person name="Shen Y."/>
            <person name="Lu W."/>
            <person name="Wang J."/>
            <person name="Liu H."/>
            <person name="Yang J."/>
            <person name="Yang F."/>
            <person name="Zhang X."/>
            <person name="Zhang J."/>
            <person name="Yang G."/>
            <person name="Wu H."/>
            <person name="Qu D."/>
            <person name="Dong J."/>
            <person name="Sun L."/>
            <person name="Xue Y."/>
            <person name="Zhao A."/>
            <person name="Gao Y."/>
            <person name="Zhu J."/>
            <person name="Kan B."/>
            <person name="Ding K."/>
            <person name="Chen S."/>
            <person name="Cheng H."/>
            <person name="Yao Z."/>
            <person name="He B."/>
            <person name="Chen R."/>
            <person name="Ma D."/>
            <person name="Qiang B."/>
            <person name="Wen Y."/>
            <person name="Hou Y."/>
            <person name="Yu J."/>
        </authorList>
    </citation>
    <scope>NUCLEOTIDE SEQUENCE [LARGE SCALE GENOMIC DNA]</scope>
    <source>
        <strain>301 / Serotype 2a</strain>
    </source>
</reference>
<reference key="2">
    <citation type="journal article" date="2003" name="Infect. Immun.">
        <title>Complete genome sequence and comparative genomics of Shigella flexneri serotype 2a strain 2457T.</title>
        <authorList>
            <person name="Wei J."/>
            <person name="Goldberg M.B."/>
            <person name="Burland V."/>
            <person name="Venkatesan M.M."/>
            <person name="Deng W."/>
            <person name="Fournier G."/>
            <person name="Mayhew G.F."/>
            <person name="Plunkett G. III"/>
            <person name="Rose D.J."/>
            <person name="Darling A."/>
            <person name="Mau B."/>
            <person name="Perna N.T."/>
            <person name="Payne S.M."/>
            <person name="Runyen-Janecky L.J."/>
            <person name="Zhou S."/>
            <person name="Schwartz D.C."/>
            <person name="Blattner F.R."/>
        </authorList>
    </citation>
    <scope>NUCLEOTIDE SEQUENCE [LARGE SCALE GENOMIC DNA]</scope>
    <source>
        <strain>ATCC 700930 / 2457T / Serotype 2a</strain>
    </source>
</reference>
<accession>P0AEM5</accession>
<accession>P43532</accession>
<protein>
    <recommendedName>
        <fullName>Negative regulator of flagellin synthesis</fullName>
    </recommendedName>
    <alternativeName>
        <fullName>Anti-sigma-28 factor</fullName>
    </alternativeName>
</protein>
<comment type="function">
    <text evidence="1">Responsible for the coupling of flagellin expression to flagellar assembly by preventing expression of the flagellin genes when a component of the middle class of proteins is defective. It negatively regulates flagellar genes by inhibiting the activity of FliA by directly binding to FliA (By similarity).</text>
</comment>
<comment type="similarity">
    <text evidence="3">Belongs to the FlgM family.</text>
</comment>
<keyword id="KW-1005">Bacterial flagellum biogenesis</keyword>
<keyword id="KW-1185">Reference proteome</keyword>
<keyword id="KW-0678">Repressor</keyword>
<keyword id="KW-0804">Transcription</keyword>
<keyword id="KW-0805">Transcription regulation</keyword>
<sequence length="97" mass="10341">MSIDRTSPLKPVSTVQPRETTDAPVTNSRAAKTTASTSTSVTLSDAQAKLMQPGSSDINLERVEALKLAIRNGELKMDTGKIADALINEAQQDLQSN</sequence>
<proteinExistence type="inferred from homology"/>
<evidence type="ECO:0000250" key="1"/>
<evidence type="ECO:0000256" key="2">
    <source>
        <dbReference type="SAM" id="MobiDB-lite"/>
    </source>
</evidence>
<evidence type="ECO:0000305" key="3"/>
<gene>
    <name type="primary">flgM</name>
    <name type="ordered locus">SF1077</name>
    <name type="ordered locus">S1155</name>
</gene>
<dbReference type="EMBL" id="AE005674">
    <property type="protein sequence ID" value="AAN42699.1"/>
    <property type="molecule type" value="Genomic_DNA"/>
</dbReference>
<dbReference type="EMBL" id="AE014073">
    <property type="protein sequence ID" value="AAP16586.1"/>
    <property type="molecule type" value="Genomic_DNA"/>
</dbReference>
<dbReference type="RefSeq" id="NP_706992.1">
    <property type="nucleotide sequence ID" value="NC_004337.2"/>
</dbReference>
<dbReference type="RefSeq" id="WP_000020880.1">
    <property type="nucleotide sequence ID" value="NZ_WPGW01000001.1"/>
</dbReference>
<dbReference type="SMR" id="P0AEM5"/>
<dbReference type="STRING" id="198214.SF1077"/>
<dbReference type="PaxDb" id="198214-SF1077"/>
<dbReference type="GeneID" id="1024006"/>
<dbReference type="GeneID" id="75203658"/>
<dbReference type="KEGG" id="sfl:SF1077"/>
<dbReference type="KEGG" id="sfx:S1155"/>
<dbReference type="PATRIC" id="fig|198214.7.peg.1260"/>
<dbReference type="HOGENOM" id="CLU_149304_2_2_6"/>
<dbReference type="Proteomes" id="UP000001006">
    <property type="component" value="Chromosome"/>
</dbReference>
<dbReference type="Proteomes" id="UP000002673">
    <property type="component" value="Chromosome"/>
</dbReference>
<dbReference type="GO" id="GO:0044781">
    <property type="term" value="P:bacterial-type flagellum organization"/>
    <property type="evidence" value="ECO:0007669"/>
    <property type="project" value="UniProtKB-KW"/>
</dbReference>
<dbReference type="GO" id="GO:0045892">
    <property type="term" value="P:negative regulation of DNA-templated transcription"/>
    <property type="evidence" value="ECO:0007669"/>
    <property type="project" value="InterPro"/>
</dbReference>
<dbReference type="InterPro" id="IPR035890">
    <property type="entry name" value="Anti-sigma-28_factor_FlgM_sf"/>
</dbReference>
<dbReference type="InterPro" id="IPR007412">
    <property type="entry name" value="FlgM"/>
</dbReference>
<dbReference type="InterPro" id="IPR031316">
    <property type="entry name" value="FlgM_C"/>
</dbReference>
<dbReference type="NCBIfam" id="TIGR03824">
    <property type="entry name" value="FlgM_jcvi"/>
    <property type="match status" value="1"/>
</dbReference>
<dbReference type="Pfam" id="PF04316">
    <property type="entry name" value="FlgM"/>
    <property type="match status" value="1"/>
</dbReference>
<dbReference type="SUPFAM" id="SSF101498">
    <property type="entry name" value="Anti-sigma factor FlgM"/>
    <property type="match status" value="1"/>
</dbReference>
<feature type="chain" id="PRO_0000087284" description="Negative regulator of flagellin synthesis">
    <location>
        <begin position="1"/>
        <end position="97"/>
    </location>
</feature>
<feature type="region of interest" description="Disordered" evidence="2">
    <location>
        <begin position="1"/>
        <end position="39"/>
    </location>
</feature>
<feature type="compositionally biased region" description="Low complexity" evidence="2">
    <location>
        <begin position="26"/>
        <end position="39"/>
    </location>
</feature>